<comment type="function">
    <text evidence="4 6 8 10 11 12">Transcription factor that play a central role in proper axial mesendoderm morphogenesis and endoderm formation. Required for efficient differentiation of cells from the primitive streak stage to blood, by acting early in the recruitment and/or expansion of mesodermal progenitors to the hemangioblastic and hematopoietic lineages. Also involved in the morphogenesis of the heart and the gut during embryogenesis. Acts as a negative regulator of brachyury expression.</text>
</comment>
<comment type="interaction">
    <interactant intactId="EBI-13637214">
        <id>Q9WUI0</id>
    </interactant>
    <interactant intactId="EBI-13637214">
        <id>Q9WUI0</id>
        <label>Mixl1</label>
    </interactant>
    <organismsDiffer>false</organismsDiffer>
    <experiments>2</experiments>
</comment>
<comment type="interaction">
    <interactant intactId="EBI-13637214">
        <id>Q9WUI0</id>
    </interactant>
    <interactant intactId="EBI-13637160">
        <id>P20293</id>
        <label>Tbxt</label>
    </interactant>
    <organismsDiffer>false</organismsDiffer>
    <experiments>7</experiments>
</comment>
<comment type="subcellular location">
    <subcellularLocation>
        <location evidence="1 5">Nucleus</location>
    </subcellularLocation>
</comment>
<comment type="tissue specificity">
    <text evidence="5 9">Expressed in the primitive streak of the gastrulating embryo, and marks cells destined to form mesoderm and endoderm. Present in differentiating embryonic stem cells (at protein level).</text>
</comment>
<comment type="developmental stage">
    <text evidence="3 5">Initially expressed in visceral endoderm and becomes restricted to primitive streak and nascent mesoderm at gastrulation. This includes the hemangioblast, a precursor of hematopoietic and vascular stem cells. At 5.5 dpc, it is expressed symmetrically in the visceral endoderm but by 6.0 dpc this expression is noticeably asymmetric. At 6.5 dpc, expression is restricted to the nascent primitive streak and persists in the primitive streak through 7.5-9.5 dpc, marking those cells fated to form extra-embryonic and lateral mesoderm.</text>
</comment>
<comment type="induction">
    <text evidence="7 13">By TGF-beta. Regulated by Nodal in mesendoderm morphogenesis. Regulated by FOXH1, which acts as a negative regulator by recruiting GSC to promoter during early development.</text>
</comment>
<comment type="disruption phenotype">
    <text evidence="4">Mice display defects in mesendoderm morphogenesis and patterning during development. Embryos show a marked thickening of the primitive streak. By the early somite stage, embryonic development is arrested, with the formation of abnormal head folds, foreshortened body axis, absence of heart tube and gut, deficient paraxial mesoderm, and an enlarged midline tissue mass that replaces the notochord. Development of extra-embryonic structures is generally normal except that the allantois is often disproportionately large for the size of the mutant embryo.</text>
</comment>
<comment type="similarity">
    <text evidence="14">Belongs to the paired homeobox family.</text>
</comment>
<evidence type="ECO:0000255" key="1">
    <source>
        <dbReference type="PROSITE-ProRule" id="PRU00108"/>
    </source>
</evidence>
<evidence type="ECO:0000256" key="2">
    <source>
        <dbReference type="SAM" id="MobiDB-lite"/>
    </source>
</evidence>
<evidence type="ECO:0000269" key="3">
    <source>
    </source>
</evidence>
<evidence type="ECO:0000269" key="4">
    <source>
    </source>
</evidence>
<evidence type="ECO:0000269" key="5">
    <source>
    </source>
</evidence>
<evidence type="ECO:0000269" key="6">
    <source>
    </source>
</evidence>
<evidence type="ECO:0000269" key="7">
    <source>
    </source>
</evidence>
<evidence type="ECO:0000269" key="8">
    <source>
    </source>
</evidence>
<evidence type="ECO:0000269" key="9">
    <source>
    </source>
</evidence>
<evidence type="ECO:0000269" key="10">
    <source>
    </source>
</evidence>
<evidence type="ECO:0000269" key="11">
    <source>
    </source>
</evidence>
<evidence type="ECO:0000269" key="12">
    <source>
    </source>
</evidence>
<evidence type="ECO:0000269" key="13">
    <source>
    </source>
</evidence>
<evidence type="ECO:0000305" key="14"/>
<accession>Q9WUI0</accession>
<accession>Q9QZ61</accession>
<sequence length="231" mass="24844">MAAAGSQQLQFAEGAAFPIFPAAHPGGQLLPAMRPASGLPAAPHDSRAPAATQCFPNRDSSPTAQTPAGLDPPGPSKGSAAPSAPQRRKRTSFSSEQLQLLELVFRQTMYPDIHLRERLAALTLLPESRIQVWFQNRRAKSRRQSGKSFQPLSSRRGVFLHCPAPGTEARCLKPQLPLEADVNHVPDPSMTGGGVCTSGSQSFETYSSLSEDIGSKLDSWEEHIFSALGNF</sequence>
<reference key="1">
    <citation type="journal article" date="1999" name="Mech. Dev.">
        <title>Mml, a mouse Mix-like gene expressed in the primitive streak.</title>
        <authorList>
            <person name="Pearce J.J.H."/>
            <person name="Evans M.J."/>
        </authorList>
    </citation>
    <scope>NUCLEOTIDE SEQUENCE [MRNA]</scope>
    <scope>DEVELOPMENTAL STAGE</scope>
</reference>
<reference key="2">
    <citation type="journal article" date="2000" name="Dev. Dyn.">
        <title>Cloning, expression analysis, and chromosomal localization of murine and human homologues of a Xenopus mix gene.</title>
        <authorList>
            <person name="Robb L."/>
            <person name="Hartley L."/>
            <person name="Begley C.G."/>
            <person name="Brodnicki T.C."/>
            <person name="Copeland N.G."/>
            <person name="Gilbert D.J."/>
            <person name="Jenkins N.A."/>
            <person name="Elefanty A.G."/>
        </authorList>
    </citation>
    <scope>NUCLEOTIDE SEQUENCE [MRNA]</scope>
    <source>
        <strain>129/Sv</strain>
        <tissue>Embryo</tissue>
    </source>
</reference>
<reference key="3">
    <citation type="journal article" date="2002" name="Gene">
        <title>Structure, upstream promoter region, and functional domains of a mouse and human Mix paired-like homeobox gene.</title>
        <authorList>
            <person name="Sahr K."/>
            <person name="Dias D.C."/>
            <person name="Sanchez R."/>
            <person name="Chen D."/>
            <person name="Chen S.W."/>
            <person name="Gudas L.J."/>
            <person name="Baron M.H."/>
        </authorList>
    </citation>
    <scope>NUCLEOTIDE SEQUENCE [GENOMIC DNA]</scope>
    <scope>NUCLEOTIDE SEQUENCE [MRNA] OF 13-231</scope>
    <scope>DNA-BINDING</scope>
    <source>
        <strain>129/SvJ</strain>
    </source>
</reference>
<reference key="4">
    <citation type="journal article" date="2004" name="Genome Res.">
        <title>The status, quality, and expansion of the NIH full-length cDNA project: the Mammalian Gene Collection (MGC).</title>
        <authorList>
            <consortium name="The MGC Project Team"/>
        </authorList>
    </citation>
    <scope>NUCLEOTIDE SEQUENCE [LARGE SCALE MRNA]</scope>
</reference>
<reference key="5">
    <citation type="journal article" date="2002" name="Development">
        <title>Mixl1 is required for axial mesendoderm morphogenesis and patterning in the murine embryo.</title>
        <authorList>
            <person name="Hart A.H."/>
            <person name="Hartley L."/>
            <person name="Sourris K."/>
            <person name="Stadler E.S."/>
            <person name="Li R."/>
            <person name="Stanley E.G."/>
            <person name="Tam P.P.L."/>
            <person name="Elefanty A.G."/>
            <person name="Robb L."/>
        </authorList>
    </citation>
    <scope>FUNCTION</scope>
    <scope>DISRUPTION PHENOTYPE</scope>
</reference>
<reference key="6">
    <citation type="journal article" date="2003" name="Dev. Dyn.">
        <title>Mouse Mix gene is activated early during differentiation of ES and F9 stem cells and induces endoderm in frog embryos.</title>
        <authorList>
            <person name="Mohn D."/>
            <person name="Chen S.W."/>
            <person name="Dias D.C."/>
            <person name="Weinstein D.C."/>
            <person name="Dyer M.A."/>
            <person name="Sahr K."/>
            <person name="Ducker C.E."/>
            <person name="Zahradka E."/>
            <person name="Keller G."/>
            <person name="Zaret K.S."/>
            <person name="Gudas L.J."/>
            <person name="Baron M.H."/>
        </authorList>
    </citation>
    <scope>SUBCELLULAR LOCATION</scope>
    <scope>TISSUE SPECIFICITY</scope>
    <scope>DEVELOPMENTAL STAGE</scope>
</reference>
<reference key="7">
    <citation type="journal article" date="2005" name="Biochem. Biophys. Res. Commun.">
        <title>Transcriptional regulation of the homeobox gene Mixl1 by TGF-beta and FoxH1.</title>
        <authorList>
            <person name="Hart A.H."/>
            <person name="Willson T.A."/>
            <person name="Wong M."/>
            <person name="Parker K."/>
            <person name="Robb L."/>
        </authorList>
    </citation>
    <scope>INDUCTION</scope>
</reference>
<reference key="8">
    <citation type="journal article" date="2005" name="Development">
        <title>The primitive streak gene Mixl1 is required for efficient haematopoiesis and BMP4-induced ventral mesoderm patterning in differentiating ES cells.</title>
        <authorList>
            <person name="Ng E.S."/>
            <person name="Azzola L."/>
            <person name="Sourris K."/>
            <person name="Robb L."/>
            <person name="Stanley E.G."/>
            <person name="Elefanty A.G."/>
        </authorList>
    </citation>
    <scope>FUNCTION</scope>
</reference>
<reference key="9">
    <citation type="journal article" date="2005" name="Stem Cells Dev.">
        <title>Mixl1 and oct4 proteins are transiently co-expressed in differentiating mouse and human embryonic stem cells.</title>
        <authorList>
            <person name="Mossman A.K."/>
            <person name="Sourris K."/>
            <person name="Ng E."/>
            <person name="Stanley E.G."/>
            <person name="Elefanty A.G."/>
        </authorList>
    </citation>
    <scope>TISSUE SPECIFICITY</scope>
</reference>
<reference key="10">
    <citation type="journal article" date="2006" name="Blood">
        <title>Acceleration of mesoderm development and expansion of hematopoietic progenitors in differentiating ES cells by the mouse Mix-like homeodomain transcription factor.</title>
        <authorList>
            <person name="Willey S."/>
            <person name="Ayuso-Sacido A."/>
            <person name="Zhang H."/>
            <person name="Fraser S.T."/>
            <person name="Sahr K.E."/>
            <person name="Adlam M.J."/>
            <person name="Kyba M."/>
            <person name="Daley G.Q."/>
            <person name="Keller G."/>
            <person name="Baron M.H."/>
        </authorList>
    </citation>
    <scope>FUNCTION</scope>
</reference>
<reference key="11">
    <citation type="journal article" date="2006" name="Proc. Natl. Acad. Sci. U.S.A.">
        <title>Enforced expression of the homeobox gene Mixl1 impairs hematopoietic differentiation and results in acute myeloid leukemia.</title>
        <authorList>
            <person name="Glaser S."/>
            <person name="Metcalf D."/>
            <person name="Wu L."/>
            <person name="Hart A.H."/>
            <person name="DiRago L."/>
            <person name="Mifsud S."/>
            <person name="D'Amico A."/>
            <person name="Dagger S."/>
            <person name="Campo C."/>
            <person name="Chan A.C."/>
            <person name="Izon D.J."/>
            <person name="Robb L."/>
        </authorList>
    </citation>
    <scope>FUNCTION</scope>
</reference>
<reference key="12">
    <citation type="journal article" date="2007" name="Development">
        <title>Sequential allocation and global pattern of movement of the definitive endoderm in the mouse embryo during gastrulation.</title>
        <authorList>
            <person name="Tam P.P.L."/>
            <person name="Khoo P.-L."/>
            <person name="Lewis S.L."/>
            <person name="Bildsoe H."/>
            <person name="Wong N."/>
            <person name="Tsang T.E."/>
            <person name="Gad J.M."/>
            <person name="Robb L."/>
        </authorList>
    </citation>
    <scope>FUNCTION</scope>
</reference>
<reference key="13">
    <citation type="journal article" date="2007" name="EMBO J.">
        <title>Foxh1 recruits Gsc to negatively regulate Mixl1 expression during early mouse development.</title>
        <authorList>
            <person name="Izzi L."/>
            <person name="Silvestri C."/>
            <person name="von Both I."/>
            <person name="Labbe E."/>
            <person name="Zakin L."/>
            <person name="Wrana J.L."/>
            <person name="Attisano L."/>
        </authorList>
    </citation>
    <scope>INDUCTION</scope>
</reference>
<reference key="14">
    <citation type="journal article" date="2007" name="Stem Cells">
        <title>Dissecting the molecular hierarchy for mesendoderm differentiation through a combination of embryonic stem cell culture and RNA interference.</title>
        <authorList>
            <person name="Izumi N."/>
            <person name="Era T."/>
            <person name="Akimaru H."/>
            <person name="Yasunaga M."/>
            <person name="Nishikawa S."/>
        </authorList>
    </citation>
    <scope>FUNCTION</scope>
</reference>
<keyword id="KW-0217">Developmental protein</keyword>
<keyword id="KW-0221">Differentiation</keyword>
<keyword id="KW-0238">DNA-binding</keyword>
<keyword id="KW-0371">Homeobox</keyword>
<keyword id="KW-0539">Nucleus</keyword>
<keyword id="KW-1185">Reference proteome</keyword>
<keyword id="KW-0804">Transcription</keyword>
<keyword id="KW-0805">Transcription regulation</keyword>
<gene>
    <name type="primary">Mixl1</name>
    <name type="synonym">Mix</name>
    <name type="synonym">Mml</name>
</gene>
<protein>
    <recommendedName>
        <fullName>Homeobox protein MIXL1</fullName>
    </recommendedName>
    <alternativeName>
        <fullName>Homeodomain protein MIX</fullName>
        <shortName>mMix</shortName>
    </alternativeName>
    <alternativeName>
        <fullName>MIX1 homeobox-like protein 1</fullName>
    </alternativeName>
    <alternativeName>
        <fullName>Mix.1 homeobox-like protein</fullName>
    </alternativeName>
</protein>
<dbReference type="EMBL" id="AF135063">
    <property type="protein sequence ID" value="AAD25543.1"/>
    <property type="molecule type" value="mRNA"/>
</dbReference>
<dbReference type="EMBL" id="AF154573">
    <property type="protein sequence ID" value="AAK59867.1"/>
    <property type="molecule type" value="mRNA"/>
</dbReference>
<dbReference type="EMBL" id="AF201959">
    <property type="protein sequence ID" value="AAF08314.1"/>
    <property type="molecule type" value="mRNA"/>
</dbReference>
<dbReference type="EMBL" id="AF447591">
    <property type="protein sequence ID" value="AAM77218.1"/>
    <property type="molecule type" value="Genomic_DNA"/>
</dbReference>
<dbReference type="EMBL" id="BC099876">
    <property type="protein sequence ID" value="AAH99876.1"/>
    <property type="molecule type" value="mRNA"/>
</dbReference>
<dbReference type="EMBL" id="BC099877">
    <property type="protein sequence ID" value="AAH99877.1"/>
    <property type="molecule type" value="mRNA"/>
</dbReference>
<dbReference type="CCDS" id="CCDS15571.1"/>
<dbReference type="RefSeq" id="NP_038757.1">
    <property type="nucleotide sequence ID" value="NM_013729.3"/>
</dbReference>
<dbReference type="RefSeq" id="XP_006496934.1">
    <property type="nucleotide sequence ID" value="XM_006496871.1"/>
</dbReference>
<dbReference type="SMR" id="Q9WUI0"/>
<dbReference type="BioGRID" id="205138">
    <property type="interactions" value="10"/>
</dbReference>
<dbReference type="FunCoup" id="Q9WUI0">
    <property type="interactions" value="631"/>
</dbReference>
<dbReference type="IntAct" id="Q9WUI0">
    <property type="interactions" value="16"/>
</dbReference>
<dbReference type="STRING" id="10090.ENSMUSP00000027778"/>
<dbReference type="PhosphoSitePlus" id="Q9WUI0"/>
<dbReference type="PaxDb" id="10090-ENSMUSP00000027778"/>
<dbReference type="PeptideAtlas" id="Q9WUI0"/>
<dbReference type="Antibodypedia" id="20764">
    <property type="antibodies" value="154 antibodies from 31 providers"/>
</dbReference>
<dbReference type="DNASU" id="27217"/>
<dbReference type="Ensembl" id="ENSMUST00000027778.8">
    <property type="protein sequence ID" value="ENSMUSP00000027778.8"/>
    <property type="gene ID" value="ENSMUSG00000026497.8"/>
</dbReference>
<dbReference type="GeneID" id="27217"/>
<dbReference type="KEGG" id="mmu:27217"/>
<dbReference type="UCSC" id="uc007dwp.1">
    <property type="organism name" value="mouse"/>
</dbReference>
<dbReference type="AGR" id="MGI:1351322"/>
<dbReference type="CTD" id="83881"/>
<dbReference type="MGI" id="MGI:1351322">
    <property type="gene designation" value="Mixl1"/>
</dbReference>
<dbReference type="VEuPathDB" id="HostDB:ENSMUSG00000026497"/>
<dbReference type="eggNOG" id="KOG0849">
    <property type="taxonomic scope" value="Eukaryota"/>
</dbReference>
<dbReference type="GeneTree" id="ENSGT00940000162190"/>
<dbReference type="HOGENOM" id="CLU_104890_0_0_1"/>
<dbReference type="InParanoid" id="Q9WUI0"/>
<dbReference type="OMA" id="HHSACET"/>
<dbReference type="OrthoDB" id="6159439at2759"/>
<dbReference type="PhylomeDB" id="Q9WUI0"/>
<dbReference type="TreeFam" id="TF334098"/>
<dbReference type="BioGRID-ORCS" id="27217">
    <property type="hits" value="1 hit in 79 CRISPR screens"/>
</dbReference>
<dbReference type="ChiTaRS" id="Mixl1">
    <property type="organism name" value="mouse"/>
</dbReference>
<dbReference type="PRO" id="PR:Q9WUI0"/>
<dbReference type="Proteomes" id="UP000000589">
    <property type="component" value="Chromosome 1"/>
</dbReference>
<dbReference type="RNAct" id="Q9WUI0">
    <property type="molecule type" value="protein"/>
</dbReference>
<dbReference type="Bgee" id="ENSMUSG00000026497">
    <property type="expression patterns" value="Expressed in embryonic post-anal tail and 24 other cell types or tissues"/>
</dbReference>
<dbReference type="GO" id="GO:0000785">
    <property type="term" value="C:chromatin"/>
    <property type="evidence" value="ECO:0000314"/>
    <property type="project" value="BHF-UCL"/>
</dbReference>
<dbReference type="GO" id="GO:0005654">
    <property type="term" value="C:nucleoplasm"/>
    <property type="evidence" value="ECO:0000304"/>
    <property type="project" value="Reactome"/>
</dbReference>
<dbReference type="GO" id="GO:0005634">
    <property type="term" value="C:nucleus"/>
    <property type="evidence" value="ECO:0000314"/>
    <property type="project" value="BHF-UCL"/>
</dbReference>
<dbReference type="GO" id="GO:0000987">
    <property type="term" value="F:cis-regulatory region sequence-specific DNA binding"/>
    <property type="evidence" value="ECO:0000314"/>
    <property type="project" value="BHF-UCL"/>
</dbReference>
<dbReference type="GO" id="GO:0001228">
    <property type="term" value="F:DNA-binding transcription activator activity, RNA polymerase II-specific"/>
    <property type="evidence" value="ECO:0000314"/>
    <property type="project" value="BHF-UCL"/>
</dbReference>
<dbReference type="GO" id="GO:0042802">
    <property type="term" value="F:identical protein binding"/>
    <property type="evidence" value="ECO:0000353"/>
    <property type="project" value="IntAct"/>
</dbReference>
<dbReference type="GO" id="GO:0042803">
    <property type="term" value="F:protein homodimerization activity"/>
    <property type="evidence" value="ECO:0000353"/>
    <property type="project" value="BHF-UCL"/>
</dbReference>
<dbReference type="GO" id="GO:0000978">
    <property type="term" value="F:RNA polymerase II cis-regulatory region sequence-specific DNA binding"/>
    <property type="evidence" value="ECO:0000314"/>
    <property type="project" value="BHF-UCL"/>
</dbReference>
<dbReference type="GO" id="GO:0061629">
    <property type="term" value="F:RNA polymerase II-specific DNA-binding transcription factor binding"/>
    <property type="evidence" value="ECO:0000353"/>
    <property type="project" value="BHF-UCL"/>
</dbReference>
<dbReference type="GO" id="GO:0042074">
    <property type="term" value="P:cell migration involved in gastrulation"/>
    <property type="evidence" value="ECO:0000315"/>
    <property type="project" value="MGI"/>
</dbReference>
<dbReference type="GO" id="GO:0048565">
    <property type="term" value="P:digestive tract development"/>
    <property type="evidence" value="ECO:0000315"/>
    <property type="project" value="MGI"/>
</dbReference>
<dbReference type="GO" id="GO:0007492">
    <property type="term" value="P:endoderm development"/>
    <property type="evidence" value="ECO:0000315"/>
    <property type="project" value="MGI"/>
</dbReference>
<dbReference type="GO" id="GO:0001706">
    <property type="term" value="P:endoderm formation"/>
    <property type="evidence" value="ECO:0000315"/>
    <property type="project" value="MGI"/>
</dbReference>
<dbReference type="GO" id="GO:0035987">
    <property type="term" value="P:endodermal cell differentiation"/>
    <property type="evidence" value="ECO:0000314"/>
    <property type="project" value="BHF-UCL"/>
</dbReference>
<dbReference type="GO" id="GO:0007369">
    <property type="term" value="P:gastrulation"/>
    <property type="evidence" value="ECO:0000315"/>
    <property type="project" value="MGI"/>
</dbReference>
<dbReference type="GO" id="GO:0007507">
    <property type="term" value="P:heart development"/>
    <property type="evidence" value="ECO:0000315"/>
    <property type="project" value="MGI"/>
</dbReference>
<dbReference type="GO" id="GO:0002244">
    <property type="term" value="P:hematopoietic progenitor cell differentiation"/>
    <property type="evidence" value="ECO:0000314"/>
    <property type="project" value="BHF-UCL"/>
</dbReference>
<dbReference type="GO" id="GO:0030097">
    <property type="term" value="P:hemopoiesis"/>
    <property type="evidence" value="ECO:0000314"/>
    <property type="project" value="MGI"/>
</dbReference>
<dbReference type="GO" id="GO:1901533">
    <property type="term" value="P:negative regulation of hematopoietic progenitor cell differentiation"/>
    <property type="evidence" value="ECO:0000314"/>
    <property type="project" value="BHF-UCL"/>
</dbReference>
<dbReference type="GO" id="GO:2000382">
    <property type="term" value="P:positive regulation of mesoderm development"/>
    <property type="evidence" value="ECO:0000314"/>
    <property type="project" value="BHF-UCL"/>
</dbReference>
<dbReference type="GO" id="GO:0045944">
    <property type="term" value="P:positive regulation of transcription by RNA polymerase II"/>
    <property type="evidence" value="ECO:0000314"/>
    <property type="project" value="BHF-UCL"/>
</dbReference>
<dbReference type="CDD" id="cd00086">
    <property type="entry name" value="homeodomain"/>
    <property type="match status" value="1"/>
</dbReference>
<dbReference type="FunFam" id="1.10.10.60:FF:000329">
    <property type="entry name" value="Mix paired-like homeobox"/>
    <property type="match status" value="1"/>
</dbReference>
<dbReference type="Gene3D" id="1.10.10.60">
    <property type="entry name" value="Homeodomain-like"/>
    <property type="match status" value="1"/>
</dbReference>
<dbReference type="InterPro" id="IPR001356">
    <property type="entry name" value="HD"/>
</dbReference>
<dbReference type="InterPro" id="IPR017970">
    <property type="entry name" value="Homeobox_CS"/>
</dbReference>
<dbReference type="InterPro" id="IPR009057">
    <property type="entry name" value="Homeodomain-like_sf"/>
</dbReference>
<dbReference type="InterPro" id="IPR042917">
    <property type="entry name" value="MIXL1"/>
</dbReference>
<dbReference type="PANTHER" id="PTHR47656">
    <property type="entry name" value="HOMEOBOX PROTEIN MIXL"/>
    <property type="match status" value="1"/>
</dbReference>
<dbReference type="PANTHER" id="PTHR47656:SF1">
    <property type="entry name" value="HOMEOBOX PROTEIN MIXL1"/>
    <property type="match status" value="1"/>
</dbReference>
<dbReference type="Pfam" id="PF00046">
    <property type="entry name" value="Homeodomain"/>
    <property type="match status" value="1"/>
</dbReference>
<dbReference type="SMART" id="SM00389">
    <property type="entry name" value="HOX"/>
    <property type="match status" value="1"/>
</dbReference>
<dbReference type="SUPFAM" id="SSF46689">
    <property type="entry name" value="Homeodomain-like"/>
    <property type="match status" value="1"/>
</dbReference>
<dbReference type="PROSITE" id="PS00027">
    <property type="entry name" value="HOMEOBOX_1"/>
    <property type="match status" value="1"/>
</dbReference>
<dbReference type="PROSITE" id="PS50071">
    <property type="entry name" value="HOMEOBOX_2"/>
    <property type="match status" value="1"/>
</dbReference>
<feature type="chain" id="PRO_0000311334" description="Homeobox protein MIXL1">
    <location>
        <begin position="1"/>
        <end position="231"/>
    </location>
</feature>
<feature type="DNA-binding region" description="Homeobox" evidence="1">
    <location>
        <begin position="86"/>
        <end position="145"/>
    </location>
</feature>
<feature type="region of interest" description="Disordered" evidence="2">
    <location>
        <begin position="23"/>
        <end position="93"/>
    </location>
</feature>
<feature type="compositionally biased region" description="Polar residues" evidence="2">
    <location>
        <begin position="54"/>
        <end position="66"/>
    </location>
</feature>
<feature type="compositionally biased region" description="Low complexity" evidence="2">
    <location>
        <begin position="76"/>
        <end position="85"/>
    </location>
</feature>
<name>MIXL1_MOUSE</name>
<proteinExistence type="evidence at protein level"/>
<organism>
    <name type="scientific">Mus musculus</name>
    <name type="common">Mouse</name>
    <dbReference type="NCBI Taxonomy" id="10090"/>
    <lineage>
        <taxon>Eukaryota</taxon>
        <taxon>Metazoa</taxon>
        <taxon>Chordata</taxon>
        <taxon>Craniata</taxon>
        <taxon>Vertebrata</taxon>
        <taxon>Euteleostomi</taxon>
        <taxon>Mammalia</taxon>
        <taxon>Eutheria</taxon>
        <taxon>Euarchontoglires</taxon>
        <taxon>Glires</taxon>
        <taxon>Rodentia</taxon>
        <taxon>Myomorpha</taxon>
        <taxon>Muroidea</taxon>
        <taxon>Muridae</taxon>
        <taxon>Murinae</taxon>
        <taxon>Mus</taxon>
        <taxon>Mus</taxon>
    </lineage>
</organism>